<feature type="chain" id="PRO_0000365892" description="ATP synthase subunit c">
    <location>
        <begin position="1"/>
        <end position="78"/>
    </location>
</feature>
<feature type="transmembrane region" description="Helical" evidence="1">
    <location>
        <begin position="11"/>
        <end position="31"/>
    </location>
</feature>
<feature type="transmembrane region" description="Helical" evidence="1">
    <location>
        <begin position="53"/>
        <end position="73"/>
    </location>
</feature>
<feature type="site" description="Reversibly protonated during proton transport" evidence="1">
    <location>
        <position position="61"/>
    </location>
</feature>
<accession>Q28UC7</accession>
<gene>
    <name evidence="1" type="primary">atpE</name>
    <name type="ordered locus">Jann_0768</name>
</gene>
<comment type="function">
    <text evidence="1">F(1)F(0) ATP synthase produces ATP from ADP in the presence of a proton or sodium gradient. F-type ATPases consist of two structural domains, F(1) containing the extramembraneous catalytic core and F(0) containing the membrane proton channel, linked together by a central stalk and a peripheral stalk. During catalysis, ATP synthesis in the catalytic domain of F(1) is coupled via a rotary mechanism of the central stalk subunits to proton translocation.</text>
</comment>
<comment type="function">
    <text evidence="1">Key component of the F(0) channel; it plays a direct role in translocation across the membrane. A homomeric c-ring of between 10-14 subunits forms the central stalk rotor element with the F(1) delta and epsilon subunits.</text>
</comment>
<comment type="subunit">
    <text evidence="1">F-type ATPases have 2 components, F(1) - the catalytic core - and F(0) - the membrane proton channel. F(1) has five subunits: alpha(3), beta(3), gamma(1), delta(1), epsilon(1). F(0) has four main subunits: a(1), b(1), b'(1) and c(10-14). The alpha and beta chains form an alternating ring which encloses part of the gamma chain. F(1) is attached to F(0) by a central stalk formed by the gamma and epsilon chains, while a peripheral stalk is formed by the delta, b and b' chains.</text>
</comment>
<comment type="subcellular location">
    <subcellularLocation>
        <location evidence="1">Cell inner membrane</location>
        <topology evidence="1">Multi-pass membrane protein</topology>
    </subcellularLocation>
</comment>
<comment type="similarity">
    <text evidence="1">Belongs to the ATPase C chain family.</text>
</comment>
<organism>
    <name type="scientific">Jannaschia sp. (strain CCS1)</name>
    <dbReference type="NCBI Taxonomy" id="290400"/>
    <lineage>
        <taxon>Bacteria</taxon>
        <taxon>Pseudomonadati</taxon>
        <taxon>Pseudomonadota</taxon>
        <taxon>Alphaproteobacteria</taxon>
        <taxon>Rhodobacterales</taxon>
        <taxon>Roseobacteraceae</taxon>
        <taxon>Jannaschia</taxon>
    </lineage>
</organism>
<name>ATPL_JANSC</name>
<dbReference type="EMBL" id="CP000264">
    <property type="protein sequence ID" value="ABD53685.1"/>
    <property type="molecule type" value="Genomic_DNA"/>
</dbReference>
<dbReference type="RefSeq" id="WP_011453893.1">
    <property type="nucleotide sequence ID" value="NC_007802.1"/>
</dbReference>
<dbReference type="SMR" id="Q28UC7"/>
<dbReference type="STRING" id="290400.Jann_0768"/>
<dbReference type="KEGG" id="jan:Jann_0768"/>
<dbReference type="eggNOG" id="COG0636">
    <property type="taxonomic scope" value="Bacteria"/>
</dbReference>
<dbReference type="HOGENOM" id="CLU_148047_4_0_5"/>
<dbReference type="OrthoDB" id="9811093at2"/>
<dbReference type="Proteomes" id="UP000008326">
    <property type="component" value="Chromosome"/>
</dbReference>
<dbReference type="GO" id="GO:0005886">
    <property type="term" value="C:plasma membrane"/>
    <property type="evidence" value="ECO:0007669"/>
    <property type="project" value="UniProtKB-SubCell"/>
</dbReference>
<dbReference type="GO" id="GO:0045259">
    <property type="term" value="C:proton-transporting ATP synthase complex"/>
    <property type="evidence" value="ECO:0007669"/>
    <property type="project" value="UniProtKB-KW"/>
</dbReference>
<dbReference type="GO" id="GO:0033177">
    <property type="term" value="C:proton-transporting two-sector ATPase complex, proton-transporting domain"/>
    <property type="evidence" value="ECO:0007669"/>
    <property type="project" value="InterPro"/>
</dbReference>
<dbReference type="GO" id="GO:0008289">
    <property type="term" value="F:lipid binding"/>
    <property type="evidence" value="ECO:0007669"/>
    <property type="project" value="UniProtKB-KW"/>
</dbReference>
<dbReference type="GO" id="GO:0046933">
    <property type="term" value="F:proton-transporting ATP synthase activity, rotational mechanism"/>
    <property type="evidence" value="ECO:0007669"/>
    <property type="project" value="UniProtKB-UniRule"/>
</dbReference>
<dbReference type="Gene3D" id="1.20.20.10">
    <property type="entry name" value="F1F0 ATP synthase subunit C"/>
    <property type="match status" value="1"/>
</dbReference>
<dbReference type="HAMAP" id="MF_01396">
    <property type="entry name" value="ATP_synth_c_bact"/>
    <property type="match status" value="1"/>
</dbReference>
<dbReference type="InterPro" id="IPR000454">
    <property type="entry name" value="ATP_synth_F0_csu"/>
</dbReference>
<dbReference type="InterPro" id="IPR038662">
    <property type="entry name" value="ATP_synth_F0_csu_sf"/>
</dbReference>
<dbReference type="InterPro" id="IPR002379">
    <property type="entry name" value="ATPase_proteolipid_c-like_dom"/>
</dbReference>
<dbReference type="InterPro" id="IPR035921">
    <property type="entry name" value="F/V-ATP_Csub_sf"/>
</dbReference>
<dbReference type="NCBIfam" id="NF005733">
    <property type="entry name" value="PRK07558.1"/>
    <property type="match status" value="1"/>
</dbReference>
<dbReference type="PANTHER" id="PTHR10031">
    <property type="entry name" value="ATP SYNTHASE LIPID-BINDING PROTEIN, MITOCHONDRIAL"/>
    <property type="match status" value="1"/>
</dbReference>
<dbReference type="PANTHER" id="PTHR10031:SF0">
    <property type="entry name" value="ATPASE PROTEIN 9"/>
    <property type="match status" value="1"/>
</dbReference>
<dbReference type="Pfam" id="PF00137">
    <property type="entry name" value="ATP-synt_C"/>
    <property type="match status" value="1"/>
</dbReference>
<dbReference type="PRINTS" id="PR00124">
    <property type="entry name" value="ATPASEC"/>
</dbReference>
<dbReference type="SUPFAM" id="SSF81333">
    <property type="entry name" value="F1F0 ATP synthase subunit C"/>
    <property type="match status" value="1"/>
</dbReference>
<reference key="1">
    <citation type="submission" date="2006-02" db="EMBL/GenBank/DDBJ databases">
        <title>Complete sequence of chromosome of Jannaschia sp. CCS1.</title>
        <authorList>
            <consortium name="US DOE Joint Genome Institute"/>
            <person name="Copeland A."/>
            <person name="Lucas S."/>
            <person name="Lapidus A."/>
            <person name="Barry K."/>
            <person name="Detter J.C."/>
            <person name="Glavina del Rio T."/>
            <person name="Hammon N."/>
            <person name="Israni S."/>
            <person name="Pitluck S."/>
            <person name="Brettin T."/>
            <person name="Bruce D."/>
            <person name="Han C."/>
            <person name="Tapia R."/>
            <person name="Gilna P."/>
            <person name="Chertkov O."/>
            <person name="Saunders E."/>
            <person name="Schmutz J."/>
            <person name="Larimer F."/>
            <person name="Land M."/>
            <person name="Kyrpides N."/>
            <person name="Lykidis A."/>
            <person name="Moran M.A."/>
            <person name="Belas R."/>
            <person name="Ye W."/>
            <person name="Buchan A."/>
            <person name="Gonzalez J.M."/>
            <person name="Schell M.A."/>
            <person name="Richardson P."/>
        </authorList>
    </citation>
    <scope>NUCLEOTIDE SEQUENCE [LARGE SCALE GENOMIC DNA]</scope>
    <source>
        <strain>CCS1</strain>
    </source>
</reference>
<protein>
    <recommendedName>
        <fullName evidence="1">ATP synthase subunit c</fullName>
    </recommendedName>
    <alternativeName>
        <fullName evidence="1">ATP synthase F(0) sector subunit c</fullName>
    </alternativeName>
    <alternativeName>
        <fullName evidence="1">F-type ATPase subunit c</fullName>
        <shortName evidence="1">F-ATPase subunit c</shortName>
    </alternativeName>
    <alternativeName>
        <fullName evidence="1">Lipid-binding protein</fullName>
    </alternativeName>
</protein>
<keyword id="KW-0066">ATP synthesis</keyword>
<keyword id="KW-0997">Cell inner membrane</keyword>
<keyword id="KW-1003">Cell membrane</keyword>
<keyword id="KW-0138">CF(0)</keyword>
<keyword id="KW-0375">Hydrogen ion transport</keyword>
<keyword id="KW-0406">Ion transport</keyword>
<keyword id="KW-0446">Lipid-binding</keyword>
<keyword id="KW-0472">Membrane</keyword>
<keyword id="KW-1185">Reference proteome</keyword>
<keyword id="KW-0812">Transmembrane</keyword>
<keyword id="KW-1133">Transmembrane helix</keyword>
<keyword id="KW-0813">Transport</keyword>
<sequence length="78" mass="7565">MEGDIAQMGQFIGAGLAAIGSGAAAIGVGHVAGNFLAGALRNPSAAAGQTATLFIGIAFAEALGIFAFLVALLLMFAV</sequence>
<evidence type="ECO:0000255" key="1">
    <source>
        <dbReference type="HAMAP-Rule" id="MF_01396"/>
    </source>
</evidence>
<proteinExistence type="inferred from homology"/>